<gene>
    <name type="primary">HHF1</name>
    <name type="ordered locus">ADL201W</name>
</gene>
<organism>
    <name type="scientific">Eremothecium gossypii (strain ATCC 10895 / CBS 109.51 / FGSC 9923 / NRRL Y-1056)</name>
    <name type="common">Yeast</name>
    <name type="synonym">Ashbya gossypii</name>
    <dbReference type="NCBI Taxonomy" id="284811"/>
    <lineage>
        <taxon>Eukaryota</taxon>
        <taxon>Fungi</taxon>
        <taxon>Dikarya</taxon>
        <taxon>Ascomycota</taxon>
        <taxon>Saccharomycotina</taxon>
        <taxon>Saccharomycetes</taxon>
        <taxon>Saccharomycetales</taxon>
        <taxon>Saccharomycetaceae</taxon>
        <taxon>Eremothecium</taxon>
    </lineage>
</organism>
<keyword id="KW-0007">Acetylation</keyword>
<keyword id="KW-0158">Chromosome</keyword>
<keyword id="KW-0238">DNA-binding</keyword>
<keyword id="KW-0488">Methylation</keyword>
<keyword id="KW-0544">Nucleosome core</keyword>
<keyword id="KW-0539">Nucleus</keyword>
<keyword id="KW-1185">Reference proteome</keyword>
<comment type="function">
    <text evidence="1">Core component of nucleosome. Nucleosomes wrap and compact DNA into chromatin, limiting DNA accessibility to the cellular machineries which require DNA as a template. Histones thereby play a central role in transcription regulation, DNA repair, DNA replication and chromosomal stability. DNA accessibility is regulated via a complex set of post-translational modifications of histones, also called histone code, and nucleosome remodeling (By similarity).</text>
</comment>
<comment type="subunit">
    <text evidence="1">The nucleosome is a histone octamer containing two molecules each of H2A, H2B, H3 and H4 assembled in one H3-H4 heterotetramer and two H2A-H2B heterodimers. The octamer wraps approximately 147 bp of DNA (By similarity).</text>
</comment>
<comment type="subcellular location">
    <subcellularLocation>
        <location evidence="1">Nucleus</location>
    </subcellularLocation>
    <subcellularLocation>
        <location evidence="1">Chromosome</location>
    </subcellularLocation>
</comment>
<comment type="PTM">
    <text evidence="2">Glutarylation at Lys-92 (H4K91glu) destabilizes nucleosomes by promoting dissociation of the H2A-H2B dimers from nucleosomes.</text>
</comment>
<comment type="similarity">
    <text evidence="5">Belongs to the histone H4 family.</text>
</comment>
<protein>
    <recommendedName>
        <fullName>Histone H4.1</fullName>
    </recommendedName>
</protein>
<accession>Q757K0</accession>
<proteinExistence type="inferred from homology"/>
<sequence length="103" mass="11338">MSGRGKGGKGLGKGGAKRHRKILRDNIQGITKPAIRRLARRGGVKRISGLIYEDVRAVLKSFLESVIRDAVTYTEHAKRKTVTSLDVVYALKRQGRTLYGFGG</sequence>
<feature type="initiator methionine" description="Removed" evidence="1">
    <location>
        <position position="1"/>
    </location>
</feature>
<feature type="chain" id="PRO_0000158280" description="Histone H4.1">
    <location>
        <begin position="2"/>
        <end position="103"/>
    </location>
</feature>
<feature type="DNA-binding region">
    <location>
        <begin position="17"/>
        <end position="21"/>
    </location>
</feature>
<feature type="region of interest" description="Disordered" evidence="4">
    <location>
        <begin position="1"/>
        <end position="20"/>
    </location>
</feature>
<feature type="compositionally biased region" description="Gly residues" evidence="4">
    <location>
        <begin position="1"/>
        <end position="14"/>
    </location>
</feature>
<feature type="modified residue" description="N6-acetyl-N6-methyllysine; alternate" evidence="3">
    <location>
        <position position="6"/>
    </location>
</feature>
<feature type="modified residue" description="N6-methyllysine; alternate" evidence="2">
    <location>
        <position position="6"/>
    </location>
</feature>
<feature type="modified residue" description="N6-methyllysine; alternate" evidence="2">
    <location>
        <position position="9"/>
    </location>
</feature>
<feature type="modified residue" description="N6-acetyl-N6-methyllysine; alternate" evidence="3">
    <location>
        <position position="13"/>
    </location>
</feature>
<feature type="modified residue" description="N6-methyllysine; alternate" evidence="2">
    <location>
        <position position="13"/>
    </location>
</feature>
<feature type="modified residue" description="N6-glutaryllysine" evidence="2">
    <location>
        <position position="92"/>
    </location>
</feature>
<name>H41_EREGS</name>
<dbReference type="EMBL" id="AE016817">
    <property type="protein sequence ID" value="AAS51719.2"/>
    <property type="molecule type" value="Genomic_DNA"/>
</dbReference>
<dbReference type="RefSeq" id="NP_983895.2">
    <property type="nucleotide sequence ID" value="NM_209248.2"/>
</dbReference>
<dbReference type="RefSeq" id="NP_984872.2">
    <property type="nucleotide sequence ID" value="NM_210226.2"/>
</dbReference>
<dbReference type="SMR" id="Q757K0"/>
<dbReference type="FunCoup" id="Q757K0">
    <property type="interactions" value="1524"/>
</dbReference>
<dbReference type="STRING" id="284811.Q757K0"/>
<dbReference type="EnsemblFungi" id="AAS51719">
    <property type="protein sequence ID" value="AAS51719"/>
    <property type="gene ID" value="AGOS_ADL201W"/>
</dbReference>
<dbReference type="EnsemblFungi" id="AAS52696">
    <property type="protein sequence ID" value="AAS52696"/>
    <property type="gene ID" value="AGOS_AER012C"/>
</dbReference>
<dbReference type="GeneID" id="4620037"/>
<dbReference type="KEGG" id="ago:AGOS_ADL201W"/>
<dbReference type="KEGG" id="ago:AGOS_AER012C"/>
<dbReference type="eggNOG" id="KOG3467">
    <property type="taxonomic scope" value="Eukaryota"/>
</dbReference>
<dbReference type="HOGENOM" id="CLU_109117_2_3_1"/>
<dbReference type="InParanoid" id="Q757K0"/>
<dbReference type="OMA" id="QKEHING"/>
<dbReference type="OrthoDB" id="4061161at2759"/>
<dbReference type="Proteomes" id="UP000000591">
    <property type="component" value="Chromosome IV"/>
</dbReference>
<dbReference type="GO" id="GO:0000786">
    <property type="term" value="C:nucleosome"/>
    <property type="evidence" value="ECO:0007669"/>
    <property type="project" value="UniProtKB-KW"/>
</dbReference>
<dbReference type="GO" id="GO:0005634">
    <property type="term" value="C:nucleus"/>
    <property type="evidence" value="ECO:0007669"/>
    <property type="project" value="UniProtKB-SubCell"/>
</dbReference>
<dbReference type="GO" id="GO:0003677">
    <property type="term" value="F:DNA binding"/>
    <property type="evidence" value="ECO:0000318"/>
    <property type="project" value="GO_Central"/>
</dbReference>
<dbReference type="GO" id="GO:0046982">
    <property type="term" value="F:protein heterodimerization activity"/>
    <property type="evidence" value="ECO:0007669"/>
    <property type="project" value="InterPro"/>
</dbReference>
<dbReference type="GO" id="GO:0030527">
    <property type="term" value="F:structural constituent of chromatin"/>
    <property type="evidence" value="ECO:0007669"/>
    <property type="project" value="InterPro"/>
</dbReference>
<dbReference type="GO" id="GO:0006334">
    <property type="term" value="P:nucleosome assembly"/>
    <property type="evidence" value="ECO:0000318"/>
    <property type="project" value="GO_Central"/>
</dbReference>
<dbReference type="CDD" id="cd22912">
    <property type="entry name" value="HFD_H4"/>
    <property type="match status" value="1"/>
</dbReference>
<dbReference type="FunFam" id="1.10.20.10:FF:000007">
    <property type="entry name" value="Histone H4"/>
    <property type="match status" value="1"/>
</dbReference>
<dbReference type="Gene3D" id="1.10.20.10">
    <property type="entry name" value="Histone, subunit A"/>
    <property type="match status" value="1"/>
</dbReference>
<dbReference type="InterPro" id="IPR035425">
    <property type="entry name" value="CENP-T/H4_C"/>
</dbReference>
<dbReference type="InterPro" id="IPR009072">
    <property type="entry name" value="Histone-fold"/>
</dbReference>
<dbReference type="InterPro" id="IPR001951">
    <property type="entry name" value="Histone_H4"/>
</dbReference>
<dbReference type="InterPro" id="IPR019809">
    <property type="entry name" value="Histone_H4_CS"/>
</dbReference>
<dbReference type="PANTHER" id="PTHR10484">
    <property type="entry name" value="HISTONE H4"/>
    <property type="match status" value="1"/>
</dbReference>
<dbReference type="Pfam" id="PF15511">
    <property type="entry name" value="CENP-T_C"/>
    <property type="match status" value="1"/>
</dbReference>
<dbReference type="PRINTS" id="PR00623">
    <property type="entry name" value="HISTONEH4"/>
</dbReference>
<dbReference type="SMART" id="SM00417">
    <property type="entry name" value="H4"/>
    <property type="match status" value="1"/>
</dbReference>
<dbReference type="SUPFAM" id="SSF47113">
    <property type="entry name" value="Histone-fold"/>
    <property type="match status" value="1"/>
</dbReference>
<dbReference type="PROSITE" id="PS00047">
    <property type="entry name" value="HISTONE_H4"/>
    <property type="match status" value="1"/>
</dbReference>
<reference key="1">
    <citation type="journal article" date="2004" name="Science">
        <title>The Ashbya gossypii genome as a tool for mapping the ancient Saccharomyces cerevisiae genome.</title>
        <authorList>
            <person name="Dietrich F.S."/>
            <person name="Voegeli S."/>
            <person name="Brachat S."/>
            <person name="Lerch A."/>
            <person name="Gates K."/>
            <person name="Steiner S."/>
            <person name="Mohr C."/>
            <person name="Poehlmann R."/>
            <person name="Luedi P."/>
            <person name="Choi S."/>
            <person name="Wing R.A."/>
            <person name="Flavier A."/>
            <person name="Gaffney T.D."/>
            <person name="Philippsen P."/>
        </authorList>
    </citation>
    <scope>NUCLEOTIDE SEQUENCE [LARGE SCALE GENOMIC DNA]</scope>
    <source>
        <strain>ATCC 10895 / CBS 109.51 / FGSC 9923 / NRRL Y-1056</strain>
    </source>
</reference>
<reference key="2">
    <citation type="journal article" date="2013" name="G3 (Bethesda)">
        <title>Genomes of Ashbya fungi isolated from insects reveal four mating-type loci, numerous translocations, lack of transposons, and distinct gene duplications.</title>
        <authorList>
            <person name="Dietrich F.S."/>
            <person name="Voegeli S."/>
            <person name="Kuo S."/>
            <person name="Philippsen P."/>
        </authorList>
    </citation>
    <scope>GENOME REANNOTATION</scope>
    <source>
        <strain>ATCC 10895 / CBS 109.51 / FGSC 9923 / NRRL Y-1056</strain>
    </source>
</reference>
<evidence type="ECO:0000250" key="1"/>
<evidence type="ECO:0000250" key="2">
    <source>
        <dbReference type="UniProtKB" id="P02309"/>
    </source>
</evidence>
<evidence type="ECO:0000250" key="3">
    <source>
        <dbReference type="UniProtKB" id="P62805"/>
    </source>
</evidence>
<evidence type="ECO:0000256" key="4">
    <source>
        <dbReference type="SAM" id="MobiDB-lite"/>
    </source>
</evidence>
<evidence type="ECO:0000305" key="5"/>